<sequence>MRIHYLLFTFLLVLLSPLAAFSQKINEPVSCIRNGGICQYRCIGLRHKIGTCGSPFKCCK</sequence>
<comment type="function">
    <text>A synthetic peptide displays antimicrobial activities against S.aureus, P.aeruginosa, E.coli and B.cepacia. The antimicrobial activity against S.aureus, E.coli and B.cepacia is reduced in raised concentration of NaCl, but its action against P.aeruginosa is independent of NaCl concentration.</text>
</comment>
<comment type="subcellular location">
    <subcellularLocation>
        <location evidence="1">Secreted</location>
    </subcellularLocation>
</comment>
<comment type="tissue specificity">
    <text>Most highly expressed in testis and heart.</text>
</comment>
<comment type="similarity">
    <text evidence="4">Belongs to the beta-defensin family.</text>
</comment>
<accession>Q91V82</accession>
<accession>Q8R556</accession>
<organism>
    <name type="scientific">Mus musculus</name>
    <name type="common">Mouse</name>
    <dbReference type="NCBI Taxonomy" id="10090"/>
    <lineage>
        <taxon>Eukaryota</taxon>
        <taxon>Metazoa</taxon>
        <taxon>Chordata</taxon>
        <taxon>Craniata</taxon>
        <taxon>Vertebrata</taxon>
        <taxon>Euteleostomi</taxon>
        <taxon>Mammalia</taxon>
        <taxon>Eutheria</taxon>
        <taxon>Euarchontoglires</taxon>
        <taxon>Glires</taxon>
        <taxon>Rodentia</taxon>
        <taxon>Myomorpha</taxon>
        <taxon>Muroidea</taxon>
        <taxon>Muridae</taxon>
        <taxon>Murinae</taxon>
        <taxon>Mus</taxon>
        <taxon>Mus</taxon>
    </lineage>
</organism>
<reference key="1">
    <citation type="journal article" date="2002" name="Mamm. Genome">
        <title>Identification and characterisation a novel murine beta defensin related gene.</title>
        <authorList>
            <person name="Morrison G.M."/>
            <person name="Rolfe M."/>
            <person name="Kilanowski F.M."/>
            <person name="Cross S.H."/>
            <person name="Dorin J.R."/>
        </authorList>
    </citation>
    <scope>NUCLEOTIDE SEQUENCE [GENOMIC DNA]</scope>
    <source>
        <strain>C57BL/6J</strain>
    </source>
</reference>
<reference key="2">
    <citation type="journal article" date="2002" name="Mamm. Genome">
        <authorList>
            <person name="Morrison G.M."/>
            <person name="Rolfe M."/>
            <person name="Kilanowski F.M."/>
            <person name="Cross S.H."/>
            <person name="Dorin J.R."/>
        </authorList>
    </citation>
    <scope>ERRATUM OF PUBMED:12226710</scope>
</reference>
<reference key="3">
    <citation type="submission" date="2001-07" db="EMBL/GenBank/DDBJ databases">
        <title>Cloning and characterization of mBD-7 and mBD-8, two novel mouse beta-defensins.</title>
        <authorList>
            <person name="Conejo-Garcia J.-R."/>
            <person name="Nehls M.C."/>
            <person name="Wattler S."/>
            <person name="Bals R."/>
            <person name="Heitland A."/>
            <person name="Kluever E."/>
            <person name="Liepke C."/>
            <person name="Adermann K."/>
            <person name="Forssmann W.-G."/>
        </authorList>
    </citation>
    <scope>NUCLEOTIDE SEQUENCE [GENOMIC DNA / MRNA]</scope>
    <source>
        <tissue>Lung</tissue>
    </source>
</reference>
<reference key="4">
    <citation type="journal article" date="2001" name="Protein Sci.">
        <title>Structure determination of human and murine beta-defensins reveals structural conservation in the absence of significant sequence similarity.</title>
        <authorList>
            <person name="Bauer F."/>
            <person name="Schweimer K."/>
            <person name="Kluever E."/>
            <person name="Conejo-Garcia J.-R."/>
            <person name="Forssmann W.-G."/>
            <person name="Roesch P."/>
            <person name="Adermann K."/>
            <person name="Sticht H."/>
        </authorList>
    </citation>
    <scope>STRUCTURE BY NMR OF 26-60</scope>
    <scope>DISULFIDE BONDS</scope>
</reference>
<gene>
    <name type="primary">Defb8</name>
</gene>
<keyword id="KW-0002">3D-structure</keyword>
<keyword id="KW-0044">Antibiotic</keyword>
<keyword id="KW-0929">Antimicrobial</keyword>
<keyword id="KW-0211">Defensin</keyword>
<keyword id="KW-1015">Disulfide bond</keyword>
<keyword id="KW-1185">Reference proteome</keyword>
<keyword id="KW-0964">Secreted</keyword>
<keyword id="KW-0732">Signal</keyword>
<evidence type="ECO:0000250" key="1"/>
<evidence type="ECO:0000255" key="2"/>
<evidence type="ECO:0000269" key="3">
    <source>
    </source>
</evidence>
<evidence type="ECO:0000305" key="4"/>
<evidence type="ECO:0007829" key="5">
    <source>
        <dbReference type="PDB" id="1E4R"/>
    </source>
</evidence>
<dbReference type="EMBL" id="AJ344114">
    <property type="protein sequence ID" value="CAC86998.1"/>
    <property type="molecule type" value="Genomic_DNA"/>
</dbReference>
<dbReference type="EMBL" id="AJ300674">
    <property type="protein sequence ID" value="CAC44635.1"/>
    <property type="molecule type" value="mRNA"/>
</dbReference>
<dbReference type="EMBL" id="AJ300673">
    <property type="protein sequence ID" value="CAC44634.1"/>
    <property type="molecule type" value="Genomic_DNA"/>
</dbReference>
<dbReference type="RefSeq" id="NP_694748.3">
    <property type="nucleotide sequence ID" value="NM_153108.4"/>
</dbReference>
<dbReference type="PDB" id="1E4R">
    <property type="method" value="NMR"/>
    <property type="chains" value="A=26-60"/>
</dbReference>
<dbReference type="PDBsum" id="1E4R"/>
<dbReference type="SMR" id="Q91V82"/>
<dbReference type="FunCoup" id="Q91V82">
    <property type="interactions" value="157"/>
</dbReference>
<dbReference type="STRING" id="10090.ENSMUSP00000033854"/>
<dbReference type="PaxDb" id="10090-ENSMUSP00000033854"/>
<dbReference type="DNASU" id="244334"/>
<dbReference type="GeneID" id="244334"/>
<dbReference type="KEGG" id="mmu:244334"/>
<dbReference type="AGR" id="MGI:2654206"/>
<dbReference type="CTD" id="244334"/>
<dbReference type="MGI" id="MGI:2654206">
    <property type="gene designation" value="Defb8"/>
</dbReference>
<dbReference type="eggNOG" id="ENOG502SYUI">
    <property type="taxonomic scope" value="Eukaryota"/>
</dbReference>
<dbReference type="InParanoid" id="Q91V82"/>
<dbReference type="OrthoDB" id="9623680at2759"/>
<dbReference type="BioGRID-ORCS" id="244334">
    <property type="hits" value="1 hit in 75 CRISPR screens"/>
</dbReference>
<dbReference type="EvolutionaryTrace" id="Q91V82"/>
<dbReference type="PRO" id="PR:Q91V82"/>
<dbReference type="Proteomes" id="UP000000589">
    <property type="component" value="Unplaced"/>
</dbReference>
<dbReference type="RNAct" id="Q91V82">
    <property type="molecule type" value="protein"/>
</dbReference>
<dbReference type="GO" id="GO:0005576">
    <property type="term" value="C:extracellular region"/>
    <property type="evidence" value="ECO:0007669"/>
    <property type="project" value="UniProtKB-SubCell"/>
</dbReference>
<dbReference type="GO" id="GO:0042742">
    <property type="term" value="P:defense response to bacterium"/>
    <property type="evidence" value="ECO:0000314"/>
    <property type="project" value="MGI"/>
</dbReference>
<dbReference type="GO" id="GO:0050829">
    <property type="term" value="P:defense response to Gram-negative bacterium"/>
    <property type="evidence" value="ECO:0000315"/>
    <property type="project" value="UniProtKB"/>
</dbReference>
<dbReference type="GO" id="GO:0050830">
    <property type="term" value="P:defense response to Gram-positive bacterium"/>
    <property type="evidence" value="ECO:0000315"/>
    <property type="project" value="UniProtKB"/>
</dbReference>
<dbReference type="GO" id="GO:0045087">
    <property type="term" value="P:innate immune response"/>
    <property type="evidence" value="ECO:0000315"/>
    <property type="project" value="UniProtKB"/>
</dbReference>
<dbReference type="FunFam" id="3.10.360.10:FF:000001">
    <property type="entry name" value="Beta-defensin 1"/>
    <property type="match status" value="1"/>
</dbReference>
<dbReference type="Gene3D" id="3.10.360.10">
    <property type="entry name" value="Antimicrobial Peptide, Beta-defensin 2, Chain A"/>
    <property type="match status" value="1"/>
</dbReference>
<dbReference type="InterPro" id="IPR001855">
    <property type="entry name" value="Defensin_beta-like"/>
</dbReference>
<dbReference type="PANTHER" id="PTHR20515">
    <property type="entry name" value="BETA-DEFENSIN"/>
    <property type="match status" value="1"/>
</dbReference>
<dbReference type="PANTHER" id="PTHR20515:SF2">
    <property type="entry name" value="DEFENSIN BETA 4A"/>
    <property type="match status" value="1"/>
</dbReference>
<dbReference type="Pfam" id="PF00711">
    <property type="entry name" value="Defensin_beta"/>
    <property type="match status" value="1"/>
</dbReference>
<dbReference type="SUPFAM" id="SSF57392">
    <property type="entry name" value="Defensin-like"/>
    <property type="match status" value="1"/>
</dbReference>
<feature type="signal peptide" evidence="2">
    <location>
        <begin position="1"/>
        <end position="22"/>
    </location>
</feature>
<feature type="propeptide" id="PRO_0000006935">
    <location>
        <begin position="23"/>
        <end position="25"/>
    </location>
</feature>
<feature type="peptide" id="PRO_0000006936" description="Beta-defensin 8">
    <location>
        <begin position="26"/>
        <end position="60"/>
    </location>
</feature>
<feature type="disulfide bond" evidence="3">
    <location>
        <begin position="31"/>
        <end position="58"/>
    </location>
</feature>
<feature type="disulfide bond" evidence="3">
    <location>
        <begin position="38"/>
        <end position="52"/>
    </location>
</feature>
<feature type="disulfide bond" evidence="3">
    <location>
        <begin position="42"/>
        <end position="59"/>
    </location>
</feature>
<feature type="sequence conflict" description="In Ref. 1; CAC86998." evidence="4" ref="1">
    <original>E</original>
    <variation>D</variation>
    <location>
        <position position="27"/>
    </location>
</feature>
<feature type="sequence conflict" description="In Ref. 1; CAC86998." evidence="4" ref="1">
    <original>SC</original>
    <variation>TY</variation>
    <location>
        <begin position="30"/>
        <end position="31"/>
    </location>
</feature>
<feature type="helix" evidence="5">
    <location>
        <begin position="31"/>
        <end position="34"/>
    </location>
</feature>
<feature type="strand" evidence="5">
    <location>
        <begin position="37"/>
        <end position="40"/>
    </location>
</feature>
<feature type="strand" evidence="5">
    <location>
        <begin position="46"/>
        <end position="50"/>
    </location>
</feature>
<feature type="strand" evidence="5">
    <location>
        <begin position="54"/>
        <end position="60"/>
    </location>
</feature>
<proteinExistence type="evidence at protein level"/>
<protein>
    <recommendedName>
        <fullName>Beta-defensin 8</fullName>
        <shortName>BD-8</shortName>
        <shortName>mBD-8</shortName>
    </recommendedName>
    <alternativeName>
        <fullName>Defensin, beta 8</fullName>
    </alternativeName>
    <alternativeName>
        <fullName>Defensin-related peptide</fullName>
    </alternativeName>
    <alternativeName>
        <fullName>Defr1</fullName>
    </alternativeName>
</protein>
<name>DEFB8_MOUSE</name>